<comment type="function">
    <text evidence="1">Required, in concert with Hsp40 and Hsp70 and small Hsps, for the dissociation, resolubilization and refolding of aggregates of damaged proteins after heat or other environmental stresses. Extracts proteins from aggregates by unfolding and threading them in an ATP-dependent process through the axial channel of the protein hexamer, after which they can be refolded by components of the Hsp70/Hsp40 chaperone system (By similarity).</text>
</comment>
<comment type="subunit">
    <text evidence="1">Homohexamer, forming a ring with a central pore.</text>
</comment>
<comment type="subcellular location">
    <subcellularLocation>
        <location>Cytoplasm</location>
    </subcellularLocation>
    <subcellularLocation>
        <location evidence="1">Nucleus</location>
    </subcellularLocation>
    <text>More concentrated in polyribosomes than in monoribosomes, and preferentially localized in the large subunit.</text>
</comment>
<comment type="domain">
    <text evidence="1">Has 2 AAA ATPase type nucleotide-binding domains (NBDs) per monomer. ATP binding to NBD1 triggers binding of polypeptides and stimulates ATP hydrolysis at NBD2. Nucleotide binding to NBD2 is crucial for oligomerization (By similarity).</text>
</comment>
<comment type="domain">
    <text evidence="1">The C-terminal extension is involved in oligomerization.</text>
</comment>
<comment type="similarity">
    <text evidence="5">Belongs to the ClpA/ClpB family.</text>
</comment>
<reference key="1">
    <citation type="journal article" date="2003" name="Nature">
        <title>The genome sequence of the filamentous fungus Neurospora crassa.</title>
        <authorList>
            <person name="Galagan J.E."/>
            <person name="Calvo S.E."/>
            <person name="Borkovich K.A."/>
            <person name="Selker E.U."/>
            <person name="Read N.D."/>
            <person name="Jaffe D.B."/>
            <person name="FitzHugh W."/>
            <person name="Ma L.-J."/>
            <person name="Smirnov S."/>
            <person name="Purcell S."/>
            <person name="Rehman B."/>
            <person name="Elkins T."/>
            <person name="Engels R."/>
            <person name="Wang S."/>
            <person name="Nielsen C.B."/>
            <person name="Butler J."/>
            <person name="Endrizzi M."/>
            <person name="Qui D."/>
            <person name="Ianakiev P."/>
            <person name="Bell-Pedersen D."/>
            <person name="Nelson M.A."/>
            <person name="Werner-Washburne M."/>
            <person name="Selitrennikoff C.P."/>
            <person name="Kinsey J.A."/>
            <person name="Braun E.L."/>
            <person name="Zelter A."/>
            <person name="Schulte U."/>
            <person name="Kothe G.O."/>
            <person name="Jedd G."/>
            <person name="Mewes H.-W."/>
            <person name="Staben C."/>
            <person name="Marcotte E."/>
            <person name="Greenberg D."/>
            <person name="Roy A."/>
            <person name="Foley K."/>
            <person name="Naylor J."/>
            <person name="Stange-Thomann N."/>
            <person name="Barrett R."/>
            <person name="Gnerre S."/>
            <person name="Kamal M."/>
            <person name="Kamvysselis M."/>
            <person name="Mauceli E.W."/>
            <person name="Bielke C."/>
            <person name="Rudd S."/>
            <person name="Frishman D."/>
            <person name="Krystofova S."/>
            <person name="Rasmussen C."/>
            <person name="Metzenberg R.L."/>
            <person name="Perkins D.D."/>
            <person name="Kroken S."/>
            <person name="Cogoni C."/>
            <person name="Macino G."/>
            <person name="Catcheside D.E.A."/>
            <person name="Li W."/>
            <person name="Pratt R.J."/>
            <person name="Osmani S.A."/>
            <person name="DeSouza C.P.C."/>
            <person name="Glass N.L."/>
            <person name="Orbach M.J."/>
            <person name="Berglund J.A."/>
            <person name="Voelker R."/>
            <person name="Yarden O."/>
            <person name="Plamann M."/>
            <person name="Seiler S."/>
            <person name="Dunlap J.C."/>
            <person name="Radford A."/>
            <person name="Aramayo R."/>
            <person name="Natvig D.O."/>
            <person name="Alex L.A."/>
            <person name="Mannhaupt G."/>
            <person name="Ebbole D.J."/>
            <person name="Freitag M."/>
            <person name="Paulsen I."/>
            <person name="Sachs M.S."/>
            <person name="Lander E.S."/>
            <person name="Nusbaum C."/>
            <person name="Birren B.W."/>
        </authorList>
    </citation>
    <scope>NUCLEOTIDE SEQUENCE [LARGE SCALE GENOMIC DNA]</scope>
    <source>
        <strain>ATCC 24698 / 74-OR23-1A / CBS 708.71 / DSM 1257 / FGSC 987</strain>
    </source>
</reference>
<reference key="2">
    <citation type="journal article" date="1992" name="Biochim. Biophys. Acta">
        <title>Isolation, partial amino acid sequence, and cellular distribution of heat-shock protein hsp98 from Neurospora crassa.</title>
        <authorList>
            <person name="Vassilev A.O."/>
            <person name="Plesofsky-Vig N."/>
            <person name="Brambl R."/>
        </authorList>
    </citation>
    <scope>PROTEIN SEQUENCE OF 312-340</scope>
    <source>
        <strain>74A</strain>
    </source>
</reference>
<name>HSP98_NEUCR</name>
<protein>
    <recommendedName>
        <fullName>Heat shock protein hsp98</fullName>
    </recommendedName>
    <alternativeName>
        <fullName>Protein aggregation-remodeling factor hsp98</fullName>
    </alternativeName>
</protein>
<organism>
    <name type="scientific">Neurospora crassa (strain ATCC 24698 / 74-OR23-1A / CBS 708.71 / DSM 1257 / FGSC 987)</name>
    <dbReference type="NCBI Taxonomy" id="367110"/>
    <lineage>
        <taxon>Eukaryota</taxon>
        <taxon>Fungi</taxon>
        <taxon>Dikarya</taxon>
        <taxon>Ascomycota</taxon>
        <taxon>Pezizomycotina</taxon>
        <taxon>Sordariomycetes</taxon>
        <taxon>Sordariomycetidae</taxon>
        <taxon>Sordariales</taxon>
        <taxon>Sordariaceae</taxon>
        <taxon>Neurospora</taxon>
    </lineage>
</organism>
<dbReference type="EMBL" id="CM002238">
    <property type="protein sequence ID" value="EAA27992.1"/>
    <property type="molecule type" value="Genomic_DNA"/>
</dbReference>
<dbReference type="PIR" id="S28174">
    <property type="entry name" value="S28174"/>
</dbReference>
<dbReference type="RefSeq" id="XP_957228.1">
    <property type="nucleotide sequence ID" value="XM_952135.3"/>
</dbReference>
<dbReference type="SMR" id="P31540"/>
<dbReference type="FunCoup" id="P31540">
    <property type="interactions" value="461"/>
</dbReference>
<dbReference type="STRING" id="367110.P31540"/>
<dbReference type="PaxDb" id="5141-EFNCRP00000000125"/>
<dbReference type="EnsemblFungi" id="EAA27992">
    <property type="protein sequence ID" value="EAA27992"/>
    <property type="gene ID" value="NCU00104"/>
</dbReference>
<dbReference type="GeneID" id="3873391"/>
<dbReference type="KEGG" id="ncr:NCU00104"/>
<dbReference type="VEuPathDB" id="FungiDB:NCU00104"/>
<dbReference type="HOGENOM" id="CLU_005070_4_2_1"/>
<dbReference type="InParanoid" id="P31540"/>
<dbReference type="OrthoDB" id="47330at2759"/>
<dbReference type="Proteomes" id="UP000001805">
    <property type="component" value="Chromosome 3, Linkage Group III"/>
</dbReference>
<dbReference type="GO" id="GO:0005737">
    <property type="term" value="C:cytoplasm"/>
    <property type="evidence" value="ECO:0000318"/>
    <property type="project" value="GO_Central"/>
</dbReference>
<dbReference type="GO" id="GO:0005829">
    <property type="term" value="C:cytosol"/>
    <property type="evidence" value="ECO:0000318"/>
    <property type="project" value="GO_Central"/>
</dbReference>
<dbReference type="GO" id="GO:0140602">
    <property type="term" value="C:nucleolar peripheral inclusion body"/>
    <property type="evidence" value="ECO:0007669"/>
    <property type="project" value="EnsemblFungi"/>
</dbReference>
<dbReference type="GO" id="GO:0140453">
    <property type="term" value="C:protein aggregate center"/>
    <property type="evidence" value="ECO:0007669"/>
    <property type="project" value="EnsemblFungi"/>
</dbReference>
<dbReference type="GO" id="GO:0005524">
    <property type="term" value="F:ATP binding"/>
    <property type="evidence" value="ECO:0007669"/>
    <property type="project" value="UniProtKB-KW"/>
</dbReference>
<dbReference type="GO" id="GO:0016887">
    <property type="term" value="F:ATP hydrolysis activity"/>
    <property type="evidence" value="ECO:0000318"/>
    <property type="project" value="GO_Central"/>
</dbReference>
<dbReference type="GO" id="GO:0051787">
    <property type="term" value="F:misfolded protein binding"/>
    <property type="evidence" value="ECO:0007669"/>
    <property type="project" value="EnsemblFungi"/>
</dbReference>
<dbReference type="GO" id="GO:0051087">
    <property type="term" value="F:protein-folding chaperone binding"/>
    <property type="evidence" value="ECO:0000318"/>
    <property type="project" value="GO_Central"/>
</dbReference>
<dbReference type="GO" id="GO:0051082">
    <property type="term" value="F:unfolded protein binding"/>
    <property type="evidence" value="ECO:0000318"/>
    <property type="project" value="GO_Central"/>
</dbReference>
<dbReference type="GO" id="GO:0070370">
    <property type="term" value="P:cellular heat acclimation"/>
    <property type="evidence" value="ECO:0000318"/>
    <property type="project" value="GO_Central"/>
</dbReference>
<dbReference type="GO" id="GO:0071218">
    <property type="term" value="P:cellular response to misfolded protein"/>
    <property type="evidence" value="ECO:0007669"/>
    <property type="project" value="EnsemblFungi"/>
</dbReference>
<dbReference type="GO" id="GO:0051085">
    <property type="term" value="P:chaperone cofactor-dependent protein refolding"/>
    <property type="evidence" value="ECO:0000318"/>
    <property type="project" value="GO_Central"/>
</dbReference>
<dbReference type="GO" id="GO:0030163">
    <property type="term" value="P:protein catabolic process"/>
    <property type="evidence" value="ECO:0007669"/>
    <property type="project" value="EnsemblFungi"/>
</dbReference>
<dbReference type="GO" id="GO:0042026">
    <property type="term" value="P:protein refolding"/>
    <property type="evidence" value="ECO:0000318"/>
    <property type="project" value="GO_Central"/>
</dbReference>
<dbReference type="GO" id="GO:0043335">
    <property type="term" value="P:protein unfolding"/>
    <property type="evidence" value="ECO:0000318"/>
    <property type="project" value="GO_Central"/>
</dbReference>
<dbReference type="CDD" id="cd00009">
    <property type="entry name" value="AAA"/>
    <property type="match status" value="1"/>
</dbReference>
<dbReference type="CDD" id="cd19499">
    <property type="entry name" value="RecA-like_ClpB_Hsp104-like"/>
    <property type="match status" value="1"/>
</dbReference>
<dbReference type="FunFam" id="3.40.50.300:FF:000120">
    <property type="entry name" value="ATP-dependent chaperone ClpB"/>
    <property type="match status" value="1"/>
</dbReference>
<dbReference type="FunFam" id="3.40.50.300:FF:000025">
    <property type="entry name" value="ATP-dependent Clp protease subunit"/>
    <property type="match status" value="1"/>
</dbReference>
<dbReference type="FunFam" id="3.40.50.300:FF:000010">
    <property type="entry name" value="Chaperone clpB 1, putative"/>
    <property type="match status" value="1"/>
</dbReference>
<dbReference type="Gene3D" id="1.10.8.60">
    <property type="match status" value="1"/>
</dbReference>
<dbReference type="Gene3D" id="1.10.1780.10">
    <property type="entry name" value="Clp, N-terminal domain"/>
    <property type="match status" value="1"/>
</dbReference>
<dbReference type="Gene3D" id="3.40.50.300">
    <property type="entry name" value="P-loop containing nucleotide triphosphate hydrolases"/>
    <property type="match status" value="3"/>
</dbReference>
<dbReference type="InterPro" id="IPR003593">
    <property type="entry name" value="AAA+_ATPase"/>
</dbReference>
<dbReference type="InterPro" id="IPR003959">
    <property type="entry name" value="ATPase_AAA_core"/>
</dbReference>
<dbReference type="InterPro" id="IPR019489">
    <property type="entry name" value="Clp_ATPase_C"/>
</dbReference>
<dbReference type="InterPro" id="IPR036628">
    <property type="entry name" value="Clp_N_dom_sf"/>
</dbReference>
<dbReference type="InterPro" id="IPR004176">
    <property type="entry name" value="Clp_R_dom"/>
</dbReference>
<dbReference type="InterPro" id="IPR001270">
    <property type="entry name" value="ClpA/B"/>
</dbReference>
<dbReference type="InterPro" id="IPR018368">
    <property type="entry name" value="ClpA/B_CS1"/>
</dbReference>
<dbReference type="InterPro" id="IPR028299">
    <property type="entry name" value="ClpA/B_CS2"/>
</dbReference>
<dbReference type="InterPro" id="IPR041546">
    <property type="entry name" value="ClpA/ClpB_AAA_lid"/>
</dbReference>
<dbReference type="InterPro" id="IPR050130">
    <property type="entry name" value="ClpA_ClpB"/>
</dbReference>
<dbReference type="InterPro" id="IPR027417">
    <property type="entry name" value="P-loop_NTPase"/>
</dbReference>
<dbReference type="PANTHER" id="PTHR11638">
    <property type="entry name" value="ATP-DEPENDENT CLP PROTEASE"/>
    <property type="match status" value="1"/>
</dbReference>
<dbReference type="PANTHER" id="PTHR11638:SF18">
    <property type="entry name" value="HEAT SHOCK PROTEIN 104"/>
    <property type="match status" value="1"/>
</dbReference>
<dbReference type="Pfam" id="PF00004">
    <property type="entry name" value="AAA"/>
    <property type="match status" value="1"/>
</dbReference>
<dbReference type="Pfam" id="PF07724">
    <property type="entry name" value="AAA_2"/>
    <property type="match status" value="1"/>
</dbReference>
<dbReference type="Pfam" id="PF17871">
    <property type="entry name" value="AAA_lid_9"/>
    <property type="match status" value="1"/>
</dbReference>
<dbReference type="Pfam" id="PF02861">
    <property type="entry name" value="Clp_N"/>
    <property type="match status" value="1"/>
</dbReference>
<dbReference type="Pfam" id="PF10431">
    <property type="entry name" value="ClpB_D2-small"/>
    <property type="match status" value="1"/>
</dbReference>
<dbReference type="PRINTS" id="PR00300">
    <property type="entry name" value="CLPPROTEASEA"/>
</dbReference>
<dbReference type="SMART" id="SM00382">
    <property type="entry name" value="AAA"/>
    <property type="match status" value="2"/>
</dbReference>
<dbReference type="SMART" id="SM01086">
    <property type="entry name" value="ClpB_D2-small"/>
    <property type="match status" value="1"/>
</dbReference>
<dbReference type="SUPFAM" id="SSF81923">
    <property type="entry name" value="Double Clp-N motif"/>
    <property type="match status" value="1"/>
</dbReference>
<dbReference type="SUPFAM" id="SSF52540">
    <property type="entry name" value="P-loop containing nucleoside triphosphate hydrolases"/>
    <property type="match status" value="2"/>
</dbReference>
<dbReference type="PROSITE" id="PS51903">
    <property type="entry name" value="CLP_R"/>
    <property type="match status" value="1"/>
</dbReference>
<dbReference type="PROSITE" id="PS00870">
    <property type="entry name" value="CLPAB_1"/>
    <property type="match status" value="1"/>
</dbReference>
<dbReference type="PROSITE" id="PS00871">
    <property type="entry name" value="CLPAB_2"/>
    <property type="match status" value="1"/>
</dbReference>
<proteinExistence type="evidence at protein level"/>
<accession>P31540</accession>
<accession>Q7RYM4</accession>
<keyword id="KW-0067">ATP-binding</keyword>
<keyword id="KW-0143">Chaperone</keyword>
<keyword id="KW-0175">Coiled coil</keyword>
<keyword id="KW-0963">Cytoplasm</keyword>
<keyword id="KW-0903">Direct protein sequencing</keyword>
<keyword id="KW-0547">Nucleotide-binding</keyword>
<keyword id="KW-0539">Nucleus</keyword>
<keyword id="KW-1185">Reference proteome</keyword>
<keyword id="KW-0677">Repeat</keyword>
<keyword id="KW-0346">Stress response</keyword>
<evidence type="ECO:0000250" key="1"/>
<evidence type="ECO:0000255" key="2"/>
<evidence type="ECO:0000255" key="3">
    <source>
        <dbReference type="PROSITE-ProRule" id="PRU01251"/>
    </source>
</evidence>
<evidence type="ECO:0000256" key="4">
    <source>
        <dbReference type="SAM" id="MobiDB-lite"/>
    </source>
</evidence>
<evidence type="ECO:0000305" key="5"/>
<gene>
    <name type="primary">hsp98</name>
    <name type="ORF">NCU00104</name>
</gene>
<sequence>MTSKMEFTDRAKKALEDAMALAEQYAHSQLLPVHLAVALLDPLPDPSKDQQNAPAGATSSLFRQVIERAHGDPQLFDRALKKALVRLPSQDPPPDHVSMAPSFHTVLRKANELQKTQKDTYIAVDHLITALAEEPSIMNALKEANIPKPKLVTDAIQAIRGTKRVDSRNADTEEEHENLAKFTIDMTAMAREGKIDPVIGREEEIRRVIRILSRRTKNNPVLIGEPGVGKTTVVEGLAQRIVNADVPDNLANCKLLSLDVGALVAGSKYRGEFEERMKGVLKEISESKEMIILFIDEIHLLMGAGASGEGGMDAANLLKPMLARGQLHCIGATTLAEYRKYIEKDAAFERRFQQVIVKEPSVSETISILRGLKEKYEVHHGVTISDAAIVAAANLAARYLTSRRLPDSAIDLIDEAAAAVRVARESQPEIIDSLERKLRQLKIEIHALSREKDEASKARLEQAKKDAENVEEELRPLREKYEQEKQRAKALQEARMKLESLRQKAEEASRMGDHSRAADLQYYAIPEQEAVIKRLEKEKAAADAALNAAAAETGGAMITDVVGPDQINEIVARWTGIPVTRLKTSEKEKLLHMEKHLSKIVVGQKEAVQSVSNAIRLQRSGLSNPNQPPSFLFCGPSGTGKTLLTKALAEFLFDDPKAMIRFDMSEYQERHSLSRMIGAPPGYVGHDSGGQLTEALRRKPFSILLFDEVEKAAKEVLTVLLQLMDDGRITDGQGRVVDARNCIVVMTSNLGAEYLSRPNAKDGKIDPTTRELVMNALRNYFLPEFLNRISSIVIFNRLTRREIRKIVELRIAEIQKRLQDNDRNVKIEVSEEAKDKLGALGYSPAYGARPLQRVLEKEVLNRLAVLILRGSIRDGEVARVVVQDGKITVLPNHPEVNDEDDEMMLDEEDAVDEVAPESEMDEDLYDD</sequence>
<feature type="chain" id="PRO_0000191213" description="Heat shock protein hsp98">
    <location>
        <begin position="1"/>
        <end position="927"/>
    </location>
</feature>
<feature type="domain" description="Clp R" evidence="3">
    <location>
        <begin position="2"/>
        <end position="162"/>
    </location>
</feature>
<feature type="region of interest" description="Repeat 1" evidence="3">
    <location>
        <begin position="7"/>
        <end position="87"/>
    </location>
</feature>
<feature type="region of interest" description="Repeat 2" evidence="3">
    <location>
        <begin position="99"/>
        <end position="162"/>
    </location>
</feature>
<feature type="region of interest" description="NBD1">
    <location>
        <begin position="179"/>
        <end position="428"/>
    </location>
</feature>
<feature type="region of interest" description="Disordered" evidence="4">
    <location>
        <begin position="454"/>
        <end position="473"/>
    </location>
</feature>
<feature type="region of interest" description="NBD2">
    <location>
        <begin position="562"/>
        <end position="752"/>
    </location>
</feature>
<feature type="region of interest" description="Disordered" evidence="4">
    <location>
        <begin position="908"/>
        <end position="927"/>
    </location>
</feature>
<feature type="coiled-coil region" evidence="2">
    <location>
        <begin position="429"/>
        <end position="553"/>
    </location>
</feature>
<feature type="binding site" evidence="2">
    <location>
        <begin position="224"/>
        <end position="231"/>
    </location>
    <ligand>
        <name>ATP</name>
        <dbReference type="ChEBI" id="CHEBI:30616"/>
        <label>1</label>
    </ligand>
</feature>
<feature type="binding site" evidence="2">
    <location>
        <begin position="635"/>
        <end position="642"/>
    </location>
    <ligand>
        <name>ATP</name>
        <dbReference type="ChEBI" id="CHEBI:30616"/>
        <label>2</label>
    </ligand>
</feature>